<name>VKT2_CRYNI</name>
<evidence type="ECO:0000250" key="1"/>
<evidence type="ECO:0000255" key="2"/>
<evidence type="ECO:0000255" key="3">
    <source>
        <dbReference type="PROSITE-ProRule" id="PRU00031"/>
    </source>
</evidence>
<evidence type="ECO:0000305" key="4"/>
<keyword id="KW-1015">Disulfide bond</keyword>
<keyword id="KW-0646">Protease inhibitor</keyword>
<keyword id="KW-0964">Secreted</keyword>
<keyword id="KW-0722">Serine protease inhibitor</keyword>
<keyword id="KW-0732">Signal</keyword>
<feature type="signal peptide" evidence="2">
    <location>
        <begin position="1"/>
        <end position="24"/>
    </location>
</feature>
<feature type="chain" id="PRO_5000395578" description="Kunitz-type serine protease inhibitor nigrescinin-2">
    <location>
        <begin position="25"/>
        <end position="83"/>
    </location>
</feature>
<feature type="domain" description="BPTI/Kunitz inhibitor" evidence="3">
    <location>
        <begin position="31"/>
        <end position="81"/>
    </location>
</feature>
<feature type="site" description="Reactive bond for trypsin" evidence="1">
    <location>
        <begin position="41"/>
        <end position="42"/>
    </location>
</feature>
<feature type="disulfide bond" evidence="3">
    <location>
        <begin position="31"/>
        <end position="81"/>
    </location>
</feature>
<feature type="disulfide bond" evidence="3">
    <location>
        <begin position="40"/>
        <end position="64"/>
    </location>
</feature>
<feature type="disulfide bond" evidence="3">
    <location>
        <begin position="56"/>
        <end position="77"/>
    </location>
</feature>
<proteinExistence type="evidence at transcript level"/>
<reference key="1">
    <citation type="submission" date="2006-09" db="EMBL/GenBank/DDBJ databases">
        <title>Serine protease inhibitors from the venom of Australian snakes.</title>
        <authorList>
            <person name="St Pierre L."/>
        </authorList>
    </citation>
    <scope>NUCLEOTIDE SEQUENCE [MRNA]</scope>
    <source>
        <tissue>Venom gland</tissue>
    </source>
</reference>
<organism>
    <name type="scientific">Cryptophis nigrescens</name>
    <name type="common">Eastern small-eyed snake</name>
    <name type="synonym">Rhinoplocephalus nigrescens</name>
    <dbReference type="NCBI Taxonomy" id="292442"/>
    <lineage>
        <taxon>Eukaryota</taxon>
        <taxon>Metazoa</taxon>
        <taxon>Chordata</taxon>
        <taxon>Craniata</taxon>
        <taxon>Vertebrata</taxon>
        <taxon>Euteleostomi</taxon>
        <taxon>Lepidosauria</taxon>
        <taxon>Squamata</taxon>
        <taxon>Bifurcata</taxon>
        <taxon>Unidentata</taxon>
        <taxon>Episquamata</taxon>
        <taxon>Toxicofera</taxon>
        <taxon>Serpentes</taxon>
        <taxon>Colubroidea</taxon>
        <taxon>Elapidae</taxon>
        <taxon>Hydrophiinae</taxon>
        <taxon>Cryptophis</taxon>
    </lineage>
</organism>
<accession>B5KF96</accession>
<comment type="function">
    <text evidence="1">Serine protease inhibitor.</text>
</comment>
<comment type="subcellular location">
    <subcellularLocation>
        <location evidence="1">Secreted</location>
    </subcellularLocation>
</comment>
<comment type="tissue specificity">
    <text>Expressed by the venom gland.</text>
</comment>
<comment type="similarity">
    <text evidence="4">Belongs to the venom Kunitz-type family.</text>
</comment>
<sequence length="83" mass="9175">MSSGGLLLLLGLLTLWEALTPVSSTDRPEFCELPEDSGPCKGLFHVFYYNPDQSQCLEFIYGGCYGNANNFKTIEECKRTCAA</sequence>
<protein>
    <recommendedName>
        <fullName>Kunitz-type serine protease inhibitor nigrescinin-2</fullName>
    </recommendedName>
</protein>
<dbReference type="EMBL" id="EF025517">
    <property type="protein sequence ID" value="ABM86989.1"/>
    <property type="molecule type" value="mRNA"/>
</dbReference>
<dbReference type="SMR" id="B5KF96"/>
<dbReference type="MEROPS" id="I02.052"/>
<dbReference type="GO" id="GO:0005615">
    <property type="term" value="C:extracellular space"/>
    <property type="evidence" value="ECO:0007669"/>
    <property type="project" value="TreeGrafter"/>
</dbReference>
<dbReference type="GO" id="GO:0004867">
    <property type="term" value="F:serine-type endopeptidase inhibitor activity"/>
    <property type="evidence" value="ECO:0007669"/>
    <property type="project" value="UniProtKB-KW"/>
</dbReference>
<dbReference type="CDD" id="cd22594">
    <property type="entry name" value="Kunitz_textilinin-like"/>
    <property type="match status" value="1"/>
</dbReference>
<dbReference type="FunFam" id="4.10.410.10:FF:000021">
    <property type="entry name" value="Serine protease inhibitor, putative"/>
    <property type="match status" value="1"/>
</dbReference>
<dbReference type="Gene3D" id="4.10.410.10">
    <property type="entry name" value="Pancreatic trypsin inhibitor Kunitz domain"/>
    <property type="match status" value="1"/>
</dbReference>
<dbReference type="InterPro" id="IPR002223">
    <property type="entry name" value="Kunitz_BPTI"/>
</dbReference>
<dbReference type="InterPro" id="IPR036880">
    <property type="entry name" value="Kunitz_BPTI_sf"/>
</dbReference>
<dbReference type="InterPro" id="IPR020901">
    <property type="entry name" value="Prtase_inh_Kunz-CS"/>
</dbReference>
<dbReference type="InterPro" id="IPR050098">
    <property type="entry name" value="TFPI/VKTCI-like"/>
</dbReference>
<dbReference type="PANTHER" id="PTHR10083:SF374">
    <property type="entry name" value="BPTI_KUNITZ INHIBITOR DOMAIN-CONTAINING PROTEIN"/>
    <property type="match status" value="1"/>
</dbReference>
<dbReference type="PANTHER" id="PTHR10083">
    <property type="entry name" value="KUNITZ-TYPE PROTEASE INHIBITOR-RELATED"/>
    <property type="match status" value="1"/>
</dbReference>
<dbReference type="Pfam" id="PF00014">
    <property type="entry name" value="Kunitz_BPTI"/>
    <property type="match status" value="1"/>
</dbReference>
<dbReference type="PRINTS" id="PR00759">
    <property type="entry name" value="BASICPTASE"/>
</dbReference>
<dbReference type="SMART" id="SM00131">
    <property type="entry name" value="KU"/>
    <property type="match status" value="1"/>
</dbReference>
<dbReference type="SUPFAM" id="SSF57362">
    <property type="entry name" value="BPTI-like"/>
    <property type="match status" value="1"/>
</dbReference>
<dbReference type="PROSITE" id="PS00280">
    <property type="entry name" value="BPTI_KUNITZ_1"/>
    <property type="match status" value="1"/>
</dbReference>
<dbReference type="PROSITE" id="PS50279">
    <property type="entry name" value="BPTI_KUNITZ_2"/>
    <property type="match status" value="1"/>
</dbReference>